<reference key="1">
    <citation type="journal article" date="2007" name="PLoS Genet.">
        <title>Patterns and implications of gene gain and loss in the evolution of Prochlorococcus.</title>
        <authorList>
            <person name="Kettler G.C."/>
            <person name="Martiny A.C."/>
            <person name="Huang K."/>
            <person name="Zucker J."/>
            <person name="Coleman M.L."/>
            <person name="Rodrigue S."/>
            <person name="Chen F."/>
            <person name="Lapidus A."/>
            <person name="Ferriera S."/>
            <person name="Johnson J."/>
            <person name="Steglich C."/>
            <person name="Church G.M."/>
            <person name="Richardson P."/>
            <person name="Chisholm S.W."/>
        </authorList>
    </citation>
    <scope>NUCLEOTIDE SEQUENCE [LARGE SCALE GENOMIC DNA]</scope>
    <source>
        <strain>MIT 9211</strain>
    </source>
</reference>
<evidence type="ECO:0000255" key="1">
    <source>
        <dbReference type="HAMAP-Rule" id="MF_01014"/>
    </source>
</evidence>
<accession>A9BAN4</accession>
<gene>
    <name evidence="1" type="primary">hisA</name>
    <name type="ordered locus">P9211_09651</name>
</gene>
<proteinExistence type="inferred from homology"/>
<organism>
    <name type="scientific">Prochlorococcus marinus (strain MIT 9211)</name>
    <dbReference type="NCBI Taxonomy" id="93059"/>
    <lineage>
        <taxon>Bacteria</taxon>
        <taxon>Bacillati</taxon>
        <taxon>Cyanobacteriota</taxon>
        <taxon>Cyanophyceae</taxon>
        <taxon>Synechococcales</taxon>
        <taxon>Prochlorococcaceae</taxon>
        <taxon>Prochlorococcus</taxon>
    </lineage>
</organism>
<sequence length="255" mass="27338">MELIPAIDLLEGNCVRLVQGNYNKVTKFNSDPVSQALRWEDMGASRLHIVDLDAARQGFSSNDDVIKQIAKSLSIPIQIGGGIRTSKRAKELLDYGIDRVIIGTAALEDPRLVEDLASAFPKKIVLGIDAKEGKVATRGWIEQSDVRTEDLIKQFSNAKIAAIISTDISTDGTLEGPNLKSLTSVAKVSNAPVIASGGIGSLADLISLTTLEKAGVTGVIVGRALYDNKFSLEEAIKVLLNIDLQDQPFNAKNIA</sequence>
<protein>
    <recommendedName>
        <fullName evidence="1">1-(5-phosphoribosyl)-5-[(5-phosphoribosylamino)methylideneamino] imidazole-4-carboxamide isomerase</fullName>
        <ecNumber evidence="1">5.3.1.16</ecNumber>
    </recommendedName>
    <alternativeName>
        <fullName evidence="1">Phosphoribosylformimino-5-aminoimidazole carboxamide ribotide isomerase</fullName>
    </alternativeName>
</protein>
<comment type="catalytic activity">
    <reaction evidence="1">
        <text>1-(5-phospho-beta-D-ribosyl)-5-[(5-phospho-beta-D-ribosylamino)methylideneamino]imidazole-4-carboxamide = 5-[(5-phospho-1-deoxy-D-ribulos-1-ylimino)methylamino]-1-(5-phospho-beta-D-ribosyl)imidazole-4-carboxamide</text>
        <dbReference type="Rhea" id="RHEA:15469"/>
        <dbReference type="ChEBI" id="CHEBI:58435"/>
        <dbReference type="ChEBI" id="CHEBI:58525"/>
        <dbReference type="EC" id="5.3.1.16"/>
    </reaction>
</comment>
<comment type="pathway">
    <text evidence="1">Amino-acid biosynthesis; L-histidine biosynthesis; L-histidine from 5-phospho-alpha-D-ribose 1-diphosphate: step 4/9.</text>
</comment>
<comment type="subcellular location">
    <subcellularLocation>
        <location evidence="1">Cytoplasm</location>
    </subcellularLocation>
</comment>
<comment type="similarity">
    <text evidence="1">Belongs to the HisA/HisF family.</text>
</comment>
<name>HIS4_PROM4</name>
<feature type="chain" id="PRO_1000135139" description="1-(5-phosphoribosyl)-5-[(5-phosphoribosylamino)methylideneamino] imidazole-4-carboxamide isomerase">
    <location>
        <begin position="1"/>
        <end position="255"/>
    </location>
</feature>
<feature type="active site" description="Proton acceptor" evidence="1">
    <location>
        <position position="8"/>
    </location>
</feature>
<feature type="active site" description="Proton donor" evidence="1">
    <location>
        <position position="129"/>
    </location>
</feature>
<dbReference type="EC" id="5.3.1.16" evidence="1"/>
<dbReference type="EMBL" id="CP000878">
    <property type="protein sequence ID" value="ABX08896.1"/>
    <property type="molecule type" value="Genomic_DNA"/>
</dbReference>
<dbReference type="RefSeq" id="WP_012195517.1">
    <property type="nucleotide sequence ID" value="NC_009976.1"/>
</dbReference>
<dbReference type="SMR" id="A9BAN4"/>
<dbReference type="STRING" id="93059.P9211_09651"/>
<dbReference type="KEGG" id="pmj:P9211_09651"/>
<dbReference type="eggNOG" id="COG0106">
    <property type="taxonomic scope" value="Bacteria"/>
</dbReference>
<dbReference type="HOGENOM" id="CLU_048577_1_1_3"/>
<dbReference type="OrthoDB" id="9807749at2"/>
<dbReference type="UniPathway" id="UPA00031">
    <property type="reaction ID" value="UER00009"/>
</dbReference>
<dbReference type="Proteomes" id="UP000000788">
    <property type="component" value="Chromosome"/>
</dbReference>
<dbReference type="GO" id="GO:0005737">
    <property type="term" value="C:cytoplasm"/>
    <property type="evidence" value="ECO:0007669"/>
    <property type="project" value="UniProtKB-SubCell"/>
</dbReference>
<dbReference type="GO" id="GO:0003949">
    <property type="term" value="F:1-(5-phosphoribosyl)-5-[(5-phosphoribosylamino)methylideneamino]imidazole-4-carboxamide isomerase activity"/>
    <property type="evidence" value="ECO:0007669"/>
    <property type="project" value="UniProtKB-UniRule"/>
</dbReference>
<dbReference type="GO" id="GO:0000105">
    <property type="term" value="P:L-histidine biosynthetic process"/>
    <property type="evidence" value="ECO:0007669"/>
    <property type="project" value="UniProtKB-UniRule"/>
</dbReference>
<dbReference type="GO" id="GO:0000162">
    <property type="term" value="P:L-tryptophan biosynthetic process"/>
    <property type="evidence" value="ECO:0007669"/>
    <property type="project" value="TreeGrafter"/>
</dbReference>
<dbReference type="CDD" id="cd04732">
    <property type="entry name" value="HisA"/>
    <property type="match status" value="1"/>
</dbReference>
<dbReference type="FunFam" id="3.20.20.70:FF:000009">
    <property type="entry name" value="1-(5-phosphoribosyl)-5-[(5-phosphoribosylamino)methylideneamino] imidazole-4-carboxamide isomerase"/>
    <property type="match status" value="1"/>
</dbReference>
<dbReference type="Gene3D" id="3.20.20.70">
    <property type="entry name" value="Aldolase class I"/>
    <property type="match status" value="1"/>
</dbReference>
<dbReference type="HAMAP" id="MF_01014">
    <property type="entry name" value="HisA"/>
    <property type="match status" value="1"/>
</dbReference>
<dbReference type="InterPro" id="IPR013785">
    <property type="entry name" value="Aldolase_TIM"/>
</dbReference>
<dbReference type="InterPro" id="IPR006062">
    <property type="entry name" value="His_biosynth"/>
</dbReference>
<dbReference type="InterPro" id="IPR006063">
    <property type="entry name" value="HisA_bact_arch"/>
</dbReference>
<dbReference type="InterPro" id="IPR044524">
    <property type="entry name" value="Isoase_HisA-like"/>
</dbReference>
<dbReference type="InterPro" id="IPR023016">
    <property type="entry name" value="Isoase_HisA-like_bact"/>
</dbReference>
<dbReference type="InterPro" id="IPR011060">
    <property type="entry name" value="RibuloseP-bd_barrel"/>
</dbReference>
<dbReference type="NCBIfam" id="TIGR00007">
    <property type="entry name" value="1-(5-phosphoribosyl)-5-[(5-phosphoribosylamino)methylideneamino]imidazole-4-carboxamide isomerase"/>
    <property type="match status" value="1"/>
</dbReference>
<dbReference type="NCBIfam" id="NF010112">
    <property type="entry name" value="PRK13585.1"/>
    <property type="match status" value="1"/>
</dbReference>
<dbReference type="PANTHER" id="PTHR43090">
    <property type="entry name" value="1-(5-PHOSPHORIBOSYL)-5-[(5-PHOSPHORIBOSYLAMINO)METHYLIDENEAMINO] IMIDAZOLE-4-CARBOXAMIDE ISOMERASE"/>
    <property type="match status" value="1"/>
</dbReference>
<dbReference type="PANTHER" id="PTHR43090:SF2">
    <property type="entry name" value="1-(5-PHOSPHORIBOSYL)-5-[(5-PHOSPHORIBOSYLAMINO)METHYLIDENEAMINO] IMIDAZOLE-4-CARBOXAMIDE ISOMERASE"/>
    <property type="match status" value="1"/>
</dbReference>
<dbReference type="Pfam" id="PF00977">
    <property type="entry name" value="His_biosynth"/>
    <property type="match status" value="1"/>
</dbReference>
<dbReference type="SUPFAM" id="SSF51366">
    <property type="entry name" value="Ribulose-phoshate binding barrel"/>
    <property type="match status" value="1"/>
</dbReference>
<keyword id="KW-0028">Amino-acid biosynthesis</keyword>
<keyword id="KW-0963">Cytoplasm</keyword>
<keyword id="KW-0368">Histidine biosynthesis</keyword>
<keyword id="KW-0413">Isomerase</keyword>
<keyword id="KW-1185">Reference proteome</keyword>